<protein>
    <recommendedName>
        <fullName>TPR repeat-containing protein MJ0798</fullName>
    </recommendedName>
</protein>
<sequence length="334" mass="39695">MAIKMDKNFTLEILNLLKNNVLKNRLKIGKELTEMLIDEIDKLIETANEISEEISKNSPNNSSLYDLRLIYNKLSTLYEDIDKLLGEIECILSLSNKDIKNWKLWKNLGDKAYLWKAYYEALFCYNKALELNQNTELLCKKGYALLKLYKRDLAIKYFEKASEKDRNNYKALFGLGKSYYLMSDNKNSIKYFEKVLELNPNDVEALEYLGELYYEEDCEKAINYFKKALELKPDDIDLILKVAFTYFKLKKYKHALKYFEKALKLNPNVFELEQIYESMGRIYIYLGEDEKAIECFEKLKEINLYHYEIYEIIALTYEEVGNIEKAKEFYKKLV</sequence>
<gene>
    <name type="ordered locus">MJ0798</name>
</gene>
<name>Y798_METJA</name>
<keyword id="KW-1185">Reference proteome</keyword>
<keyword id="KW-0677">Repeat</keyword>
<keyword id="KW-0802">TPR repeat</keyword>
<feature type="chain" id="PRO_0000106457" description="TPR repeat-containing protein MJ0798">
    <location>
        <begin position="1"/>
        <end position="334"/>
    </location>
</feature>
<feature type="repeat" description="TPR 1">
    <location>
        <begin position="102"/>
        <end position="135"/>
    </location>
</feature>
<feature type="repeat" description="TPR 2">
    <location>
        <begin position="137"/>
        <end position="168"/>
    </location>
</feature>
<feature type="repeat" description="TPR 3">
    <location>
        <begin position="169"/>
        <end position="202"/>
    </location>
</feature>
<feature type="repeat" description="TPR 4">
    <location>
        <begin position="204"/>
        <end position="235"/>
    </location>
</feature>
<feature type="repeat" description="TPR 5">
    <location>
        <begin position="236"/>
        <end position="269"/>
    </location>
</feature>
<feature type="repeat" description="TPR 6">
    <location>
        <begin position="273"/>
        <end position="306"/>
    </location>
</feature>
<feature type="repeat" description="TPR 7">
    <location>
        <begin position="308"/>
        <end position="333"/>
    </location>
</feature>
<proteinExistence type="predicted"/>
<accession>Q58208</accession>
<organism>
    <name type="scientific">Methanocaldococcus jannaschii (strain ATCC 43067 / DSM 2661 / JAL-1 / JCM 10045 / NBRC 100440)</name>
    <name type="common">Methanococcus jannaschii</name>
    <dbReference type="NCBI Taxonomy" id="243232"/>
    <lineage>
        <taxon>Archaea</taxon>
        <taxon>Methanobacteriati</taxon>
        <taxon>Methanobacteriota</taxon>
        <taxon>Methanomada group</taxon>
        <taxon>Methanococci</taxon>
        <taxon>Methanococcales</taxon>
        <taxon>Methanocaldococcaceae</taxon>
        <taxon>Methanocaldococcus</taxon>
    </lineage>
</organism>
<dbReference type="EMBL" id="L77117">
    <property type="protein sequence ID" value="AAB98793.1"/>
    <property type="molecule type" value="Genomic_DNA"/>
</dbReference>
<dbReference type="PIR" id="F64399">
    <property type="entry name" value="F64399"/>
</dbReference>
<dbReference type="SMR" id="Q58208"/>
<dbReference type="FunCoup" id="Q58208">
    <property type="interactions" value="1"/>
</dbReference>
<dbReference type="STRING" id="243232.MJ_0798"/>
<dbReference type="PaxDb" id="243232-MJ_0798"/>
<dbReference type="EnsemblBacteria" id="AAB98793">
    <property type="protein sequence ID" value="AAB98793"/>
    <property type="gene ID" value="MJ_0798"/>
</dbReference>
<dbReference type="KEGG" id="mja:MJ_0798"/>
<dbReference type="eggNOG" id="arCOG03032">
    <property type="taxonomic scope" value="Archaea"/>
</dbReference>
<dbReference type="HOGENOM" id="CLU_830580_0_0_2"/>
<dbReference type="InParanoid" id="Q58208"/>
<dbReference type="OrthoDB" id="115601at2157"/>
<dbReference type="PhylomeDB" id="Q58208"/>
<dbReference type="Proteomes" id="UP000000805">
    <property type="component" value="Chromosome"/>
</dbReference>
<dbReference type="Gene3D" id="1.25.40.10">
    <property type="entry name" value="Tetratricopeptide repeat domain"/>
    <property type="match status" value="2"/>
</dbReference>
<dbReference type="InterPro" id="IPR011990">
    <property type="entry name" value="TPR-like_helical_dom_sf"/>
</dbReference>
<dbReference type="InterPro" id="IPR019734">
    <property type="entry name" value="TPR_rpt"/>
</dbReference>
<dbReference type="PANTHER" id="PTHR12558">
    <property type="entry name" value="CELL DIVISION CYCLE 16,23,27"/>
    <property type="match status" value="1"/>
</dbReference>
<dbReference type="PANTHER" id="PTHR12558:SF13">
    <property type="entry name" value="CELL DIVISION CYCLE PROTEIN 27 HOMOLOG"/>
    <property type="match status" value="1"/>
</dbReference>
<dbReference type="Pfam" id="PF00515">
    <property type="entry name" value="TPR_1"/>
    <property type="match status" value="2"/>
</dbReference>
<dbReference type="Pfam" id="PF13181">
    <property type="entry name" value="TPR_8"/>
    <property type="match status" value="4"/>
</dbReference>
<dbReference type="SMART" id="SM00028">
    <property type="entry name" value="TPR"/>
    <property type="match status" value="6"/>
</dbReference>
<dbReference type="SUPFAM" id="SSF81901">
    <property type="entry name" value="HCP-like"/>
    <property type="match status" value="1"/>
</dbReference>
<dbReference type="PROSITE" id="PS50005">
    <property type="entry name" value="TPR"/>
    <property type="match status" value="6"/>
</dbReference>
<dbReference type="PROSITE" id="PS50293">
    <property type="entry name" value="TPR_REGION"/>
    <property type="match status" value="2"/>
</dbReference>
<reference key="1">
    <citation type="journal article" date="1996" name="Science">
        <title>Complete genome sequence of the methanogenic archaeon, Methanococcus jannaschii.</title>
        <authorList>
            <person name="Bult C.J."/>
            <person name="White O."/>
            <person name="Olsen G.J."/>
            <person name="Zhou L."/>
            <person name="Fleischmann R.D."/>
            <person name="Sutton G.G."/>
            <person name="Blake J.A."/>
            <person name="FitzGerald L.M."/>
            <person name="Clayton R.A."/>
            <person name="Gocayne J.D."/>
            <person name="Kerlavage A.R."/>
            <person name="Dougherty B.A."/>
            <person name="Tomb J.-F."/>
            <person name="Adams M.D."/>
            <person name="Reich C.I."/>
            <person name="Overbeek R."/>
            <person name="Kirkness E.F."/>
            <person name="Weinstock K.G."/>
            <person name="Merrick J.M."/>
            <person name="Glodek A."/>
            <person name="Scott J.L."/>
            <person name="Geoghagen N.S.M."/>
            <person name="Weidman J.F."/>
            <person name="Fuhrmann J.L."/>
            <person name="Nguyen D."/>
            <person name="Utterback T.R."/>
            <person name="Kelley J.M."/>
            <person name="Peterson J.D."/>
            <person name="Sadow P.W."/>
            <person name="Hanna M.C."/>
            <person name="Cotton M.D."/>
            <person name="Roberts K.M."/>
            <person name="Hurst M.A."/>
            <person name="Kaine B.P."/>
            <person name="Borodovsky M."/>
            <person name="Klenk H.-P."/>
            <person name="Fraser C.M."/>
            <person name="Smith H.O."/>
            <person name="Woese C.R."/>
            <person name="Venter J.C."/>
        </authorList>
    </citation>
    <scope>NUCLEOTIDE SEQUENCE [LARGE SCALE GENOMIC DNA]</scope>
    <source>
        <strain>ATCC 43067 / DSM 2661 / JAL-1 / JCM 10045 / NBRC 100440</strain>
    </source>
</reference>